<comment type="function">
    <text evidence="1">Component of the EKC/KEOPS complex that is required for the formation of a threonylcarbamoyl group on adenosine at position 37 (t(6)A37) in tRNAs that read codons beginning with adenine. The complex is probably involved in the transfer of the threonylcarbamoyl moiety of threonylcarbamoyl-AMP (TC-AMP) to the N6 group of A37. BUD32 has ATPase activity in the context of the EKC/KEOPS complex and likely plays a supporting role to the catalytic subunit KAE1. The EKC/KEOPS complex also promotes both telomere uncapping and telomere elongation. The complex is required for efficient recruitment of transcriptional coactivators.</text>
</comment>
<comment type="catalytic activity">
    <reaction evidence="1">
        <text>L-seryl-[protein] + ATP = O-phospho-L-seryl-[protein] + ADP + H(+)</text>
        <dbReference type="Rhea" id="RHEA:17989"/>
        <dbReference type="Rhea" id="RHEA-COMP:9863"/>
        <dbReference type="Rhea" id="RHEA-COMP:11604"/>
        <dbReference type="ChEBI" id="CHEBI:15378"/>
        <dbReference type="ChEBI" id="CHEBI:29999"/>
        <dbReference type="ChEBI" id="CHEBI:30616"/>
        <dbReference type="ChEBI" id="CHEBI:83421"/>
        <dbReference type="ChEBI" id="CHEBI:456216"/>
        <dbReference type="EC" id="2.7.11.1"/>
    </reaction>
</comment>
<comment type="catalytic activity">
    <reaction evidence="1">
        <text>L-threonyl-[protein] + ATP = O-phospho-L-threonyl-[protein] + ADP + H(+)</text>
        <dbReference type="Rhea" id="RHEA:46608"/>
        <dbReference type="Rhea" id="RHEA-COMP:11060"/>
        <dbReference type="Rhea" id="RHEA-COMP:11605"/>
        <dbReference type="ChEBI" id="CHEBI:15378"/>
        <dbReference type="ChEBI" id="CHEBI:30013"/>
        <dbReference type="ChEBI" id="CHEBI:30616"/>
        <dbReference type="ChEBI" id="CHEBI:61977"/>
        <dbReference type="ChEBI" id="CHEBI:456216"/>
        <dbReference type="EC" id="2.7.11.1"/>
    </reaction>
</comment>
<comment type="subunit">
    <text evidence="1">Component of the EKC/KEOPS complex composed of at least bud32, cgi121, gon7, kae1 and pcc1; the whole complex dimerizes.</text>
</comment>
<comment type="subcellular location">
    <subcellularLocation>
        <location evidence="1">Cytoplasm</location>
    </subcellularLocation>
    <subcellularLocation>
        <location evidence="1">Nucleus</location>
    </subcellularLocation>
    <subcellularLocation>
        <location evidence="1">Chromosome</location>
        <location evidence="1">Telomere</location>
    </subcellularLocation>
</comment>
<comment type="domain">
    <text evidence="1 2">This protein is considered an atypical serine/threonine kinase, because it lacks the conventional structural elements necessary for the substrate recognition as well as a lysine residue that in all other serine/threonine kinases participates in the catalytic event (By similarity). BUD32 has protein kinase activity in vitro, but in the context of the EKC/KEOPS complex, the catalytic subunit KAE1 switches the activity of BUD32 from kinase into ATPase (By similarity).</text>
</comment>
<comment type="similarity">
    <text evidence="5">Belongs to the protein kinase superfamily. BUD32 family.</text>
</comment>
<feature type="chain" id="PRO_0000278914" description="EKC/KEOPS complex subunit bud32">
    <location>
        <begin position="1"/>
        <end position="285"/>
    </location>
</feature>
<feature type="domain" description="Protein kinase" evidence="3">
    <location>
        <begin position="25"/>
        <end position="285"/>
    </location>
</feature>
<feature type="active site" description="Proton acceptor" evidence="3 4">
    <location>
        <position position="178"/>
    </location>
</feature>
<feature type="binding site" evidence="3">
    <location>
        <begin position="31"/>
        <end position="39"/>
    </location>
    <ligand>
        <name>ATP</name>
        <dbReference type="ChEBI" id="CHEBI:30616"/>
    </ligand>
</feature>
<feature type="binding site" evidence="3">
    <location>
        <position position="54"/>
    </location>
    <ligand>
        <name>ATP</name>
        <dbReference type="ChEBI" id="CHEBI:30616"/>
    </ligand>
</feature>
<gene>
    <name type="primary">bud32</name>
    <name type="ORF">AN2513</name>
</gene>
<evidence type="ECO:0000250" key="1">
    <source>
        <dbReference type="UniProtKB" id="P53323"/>
    </source>
</evidence>
<evidence type="ECO:0000250" key="2">
    <source>
        <dbReference type="UniProtKB" id="Q9UYB9"/>
    </source>
</evidence>
<evidence type="ECO:0000255" key="3">
    <source>
        <dbReference type="PROSITE-ProRule" id="PRU00159"/>
    </source>
</evidence>
<evidence type="ECO:0000255" key="4">
    <source>
        <dbReference type="PROSITE-ProRule" id="PRU10028"/>
    </source>
</evidence>
<evidence type="ECO:0000305" key="5"/>
<protein>
    <recommendedName>
        <fullName>EKC/KEOPS complex subunit bud32</fullName>
        <ecNumber evidence="2">3.6.-.-</ecNumber>
    </recommendedName>
    <alternativeName>
        <fullName>Atypical serine/threonine protein kinase bud32</fullName>
        <ecNumber evidence="1">2.7.11.1</ecNumber>
    </alternativeName>
</protein>
<sequence length="285" mass="31806">MPPTNRPPPFSTILSSASLPSYSSTDELTPIYQGAEAHLYKTTFLSPSQPAALKIRPSKPYRHPILDRRLTRARILQEARCLQKLVKEGVSVPALLGVDWEPSAGDGSSWLVMEWIEGEPVRVILEEWEAYLKGIEREKRLGLGEGVQGSEEEKVRGLMRRIGRAVGGLHRAGVIHGDLTTSNLMLRPLGSADTTETIEERDQSPSMAGEVVMIDFGLAMQSSQDEDRAVDLYVLERAFGSSHPRTERFFEEVLVGYRESYKGAVSALKRLEDVRMRGRKRSMIG</sequence>
<accession>Q5BAB7</accession>
<accession>C8VPJ3</accession>
<name>BUD32_EMENI</name>
<organism>
    <name type="scientific">Emericella nidulans (strain FGSC A4 / ATCC 38163 / CBS 112.46 / NRRL 194 / M139)</name>
    <name type="common">Aspergillus nidulans</name>
    <dbReference type="NCBI Taxonomy" id="227321"/>
    <lineage>
        <taxon>Eukaryota</taxon>
        <taxon>Fungi</taxon>
        <taxon>Dikarya</taxon>
        <taxon>Ascomycota</taxon>
        <taxon>Pezizomycotina</taxon>
        <taxon>Eurotiomycetes</taxon>
        <taxon>Eurotiomycetidae</taxon>
        <taxon>Eurotiales</taxon>
        <taxon>Aspergillaceae</taxon>
        <taxon>Aspergillus</taxon>
        <taxon>Aspergillus subgen. Nidulantes</taxon>
    </lineage>
</organism>
<proteinExistence type="inferred from homology"/>
<dbReference type="EC" id="3.6.-.-" evidence="2"/>
<dbReference type="EC" id="2.7.11.1" evidence="1"/>
<dbReference type="EMBL" id="AACD01000042">
    <property type="protein sequence ID" value="EAA63998.1"/>
    <property type="molecule type" value="Genomic_DNA"/>
</dbReference>
<dbReference type="EMBL" id="BN001307">
    <property type="protein sequence ID" value="CBF87005.1"/>
    <property type="molecule type" value="Genomic_DNA"/>
</dbReference>
<dbReference type="RefSeq" id="XP_660117.1">
    <property type="nucleotide sequence ID" value="XM_655025.1"/>
</dbReference>
<dbReference type="SMR" id="Q5BAB7"/>
<dbReference type="FunCoup" id="Q5BAB7">
    <property type="interactions" value="886"/>
</dbReference>
<dbReference type="STRING" id="227321.Q5BAB7"/>
<dbReference type="EnsemblFungi" id="CBF87005">
    <property type="protein sequence ID" value="CBF87005"/>
    <property type="gene ID" value="ANIA_02513"/>
</dbReference>
<dbReference type="KEGG" id="ani:ANIA_02513"/>
<dbReference type="VEuPathDB" id="FungiDB:AN2513"/>
<dbReference type="eggNOG" id="KOG3087">
    <property type="taxonomic scope" value="Eukaryota"/>
</dbReference>
<dbReference type="HOGENOM" id="CLU_063953_1_0_1"/>
<dbReference type="InParanoid" id="Q5BAB7"/>
<dbReference type="OMA" id="HKLYMEY"/>
<dbReference type="OrthoDB" id="3399at2759"/>
<dbReference type="Proteomes" id="UP000000560">
    <property type="component" value="Chromosome VII"/>
</dbReference>
<dbReference type="GO" id="GO:0000781">
    <property type="term" value="C:chromosome, telomeric region"/>
    <property type="evidence" value="ECO:0007669"/>
    <property type="project" value="UniProtKB-SubCell"/>
</dbReference>
<dbReference type="GO" id="GO:0005829">
    <property type="term" value="C:cytosol"/>
    <property type="evidence" value="ECO:0000314"/>
    <property type="project" value="AspGD"/>
</dbReference>
<dbReference type="GO" id="GO:0000408">
    <property type="term" value="C:EKC/KEOPS complex"/>
    <property type="evidence" value="ECO:0000318"/>
    <property type="project" value="GO_Central"/>
</dbReference>
<dbReference type="GO" id="GO:0005634">
    <property type="term" value="C:nucleus"/>
    <property type="evidence" value="ECO:0000314"/>
    <property type="project" value="AspGD"/>
</dbReference>
<dbReference type="GO" id="GO:0005524">
    <property type="term" value="F:ATP binding"/>
    <property type="evidence" value="ECO:0007669"/>
    <property type="project" value="UniProtKB-KW"/>
</dbReference>
<dbReference type="GO" id="GO:0016787">
    <property type="term" value="F:hydrolase activity"/>
    <property type="evidence" value="ECO:0007669"/>
    <property type="project" value="UniProtKB-KW"/>
</dbReference>
<dbReference type="GO" id="GO:0106310">
    <property type="term" value="F:protein serine kinase activity"/>
    <property type="evidence" value="ECO:0007669"/>
    <property type="project" value="RHEA"/>
</dbReference>
<dbReference type="GO" id="GO:0004674">
    <property type="term" value="F:protein serine/threonine kinase activity"/>
    <property type="evidence" value="ECO:0000318"/>
    <property type="project" value="GO_Central"/>
</dbReference>
<dbReference type="GO" id="GO:0043936">
    <property type="term" value="P:asexual sporulation resulting in formation of a cellular spore"/>
    <property type="evidence" value="ECO:0000315"/>
    <property type="project" value="AspGD"/>
</dbReference>
<dbReference type="GO" id="GO:0030448">
    <property type="term" value="P:hyphal growth"/>
    <property type="evidence" value="ECO:0000315"/>
    <property type="project" value="AspGD"/>
</dbReference>
<dbReference type="GO" id="GO:0008033">
    <property type="term" value="P:tRNA processing"/>
    <property type="evidence" value="ECO:0007669"/>
    <property type="project" value="UniProtKB-KW"/>
</dbReference>
<dbReference type="GO" id="GO:0070525">
    <property type="term" value="P:tRNA threonylcarbamoyladenosine metabolic process"/>
    <property type="evidence" value="ECO:0000318"/>
    <property type="project" value="GO_Central"/>
</dbReference>
<dbReference type="FunFam" id="3.30.200.20:FF:000603">
    <property type="entry name" value="EKC/KEOPS complex subunit bud32"/>
    <property type="match status" value="1"/>
</dbReference>
<dbReference type="FunFam" id="1.10.510.10:FF:000845">
    <property type="entry name" value="Probable bifunctional tRNA threonylcarbamoyladenosine biosynthesis protein"/>
    <property type="match status" value="1"/>
</dbReference>
<dbReference type="Gene3D" id="3.30.200.20">
    <property type="entry name" value="Phosphorylase Kinase, domain 1"/>
    <property type="match status" value="1"/>
</dbReference>
<dbReference type="Gene3D" id="1.10.510.10">
    <property type="entry name" value="Transferase(Phosphotransferase) domain 1"/>
    <property type="match status" value="1"/>
</dbReference>
<dbReference type="InterPro" id="IPR022495">
    <property type="entry name" value="Bud32"/>
</dbReference>
<dbReference type="InterPro" id="IPR011009">
    <property type="entry name" value="Kinase-like_dom_sf"/>
</dbReference>
<dbReference type="InterPro" id="IPR000719">
    <property type="entry name" value="Prot_kinase_dom"/>
</dbReference>
<dbReference type="InterPro" id="IPR008266">
    <property type="entry name" value="Tyr_kinase_AS"/>
</dbReference>
<dbReference type="NCBIfam" id="TIGR03724">
    <property type="entry name" value="arch_bud32"/>
    <property type="match status" value="1"/>
</dbReference>
<dbReference type="PANTHER" id="PTHR12209:SF0">
    <property type="entry name" value="EKC_KEOPS COMPLEX SUBUNIT TP53RK"/>
    <property type="match status" value="1"/>
</dbReference>
<dbReference type="PANTHER" id="PTHR12209">
    <property type="entry name" value="NON-SPECIFIC SERINE/THREONINE PROTEIN KINASE"/>
    <property type="match status" value="1"/>
</dbReference>
<dbReference type="Pfam" id="PF06293">
    <property type="entry name" value="Kdo"/>
    <property type="match status" value="1"/>
</dbReference>
<dbReference type="SMART" id="SM00220">
    <property type="entry name" value="S_TKc"/>
    <property type="match status" value="1"/>
</dbReference>
<dbReference type="SUPFAM" id="SSF56112">
    <property type="entry name" value="Protein kinase-like (PK-like)"/>
    <property type="match status" value="1"/>
</dbReference>
<dbReference type="PROSITE" id="PS50011">
    <property type="entry name" value="PROTEIN_KINASE_DOM"/>
    <property type="match status" value="1"/>
</dbReference>
<dbReference type="PROSITE" id="PS00109">
    <property type="entry name" value="PROTEIN_KINASE_TYR"/>
    <property type="match status" value="1"/>
</dbReference>
<keyword id="KW-0010">Activator</keyword>
<keyword id="KW-0067">ATP-binding</keyword>
<keyword id="KW-0158">Chromosome</keyword>
<keyword id="KW-0963">Cytoplasm</keyword>
<keyword id="KW-0378">Hydrolase</keyword>
<keyword id="KW-0418">Kinase</keyword>
<keyword id="KW-0547">Nucleotide-binding</keyword>
<keyword id="KW-0539">Nucleus</keyword>
<keyword id="KW-0597">Phosphoprotein</keyword>
<keyword id="KW-1185">Reference proteome</keyword>
<keyword id="KW-0723">Serine/threonine-protein kinase</keyword>
<keyword id="KW-0779">Telomere</keyword>
<keyword id="KW-0804">Transcription</keyword>
<keyword id="KW-0805">Transcription regulation</keyword>
<keyword id="KW-0808">Transferase</keyword>
<keyword id="KW-0819">tRNA processing</keyword>
<reference key="1">
    <citation type="journal article" date="2005" name="Nature">
        <title>Sequencing of Aspergillus nidulans and comparative analysis with A. fumigatus and A. oryzae.</title>
        <authorList>
            <person name="Galagan J.E."/>
            <person name="Calvo S.E."/>
            <person name="Cuomo C."/>
            <person name="Ma L.-J."/>
            <person name="Wortman J.R."/>
            <person name="Batzoglou S."/>
            <person name="Lee S.-I."/>
            <person name="Bastuerkmen M."/>
            <person name="Spevak C.C."/>
            <person name="Clutterbuck J."/>
            <person name="Kapitonov V."/>
            <person name="Jurka J."/>
            <person name="Scazzocchio C."/>
            <person name="Farman M.L."/>
            <person name="Butler J."/>
            <person name="Purcell S."/>
            <person name="Harris S."/>
            <person name="Braus G.H."/>
            <person name="Draht O."/>
            <person name="Busch S."/>
            <person name="D'Enfert C."/>
            <person name="Bouchier C."/>
            <person name="Goldman G.H."/>
            <person name="Bell-Pedersen D."/>
            <person name="Griffiths-Jones S."/>
            <person name="Doonan J.H."/>
            <person name="Yu J."/>
            <person name="Vienken K."/>
            <person name="Pain A."/>
            <person name="Freitag M."/>
            <person name="Selker E.U."/>
            <person name="Archer D.B."/>
            <person name="Penalva M.A."/>
            <person name="Oakley B.R."/>
            <person name="Momany M."/>
            <person name="Tanaka T."/>
            <person name="Kumagai T."/>
            <person name="Asai K."/>
            <person name="Machida M."/>
            <person name="Nierman W.C."/>
            <person name="Denning D.W."/>
            <person name="Caddick M.X."/>
            <person name="Hynes M."/>
            <person name="Paoletti M."/>
            <person name="Fischer R."/>
            <person name="Miller B.L."/>
            <person name="Dyer P.S."/>
            <person name="Sachs M.S."/>
            <person name="Osmani S.A."/>
            <person name="Birren B.W."/>
        </authorList>
    </citation>
    <scope>NUCLEOTIDE SEQUENCE [LARGE SCALE GENOMIC DNA]</scope>
    <source>
        <strain>FGSC A4 / ATCC 38163 / CBS 112.46 / NRRL 194 / M139</strain>
    </source>
</reference>
<reference key="2">
    <citation type="journal article" date="2009" name="Fungal Genet. Biol.">
        <title>The 2008 update of the Aspergillus nidulans genome annotation: a community effort.</title>
        <authorList>
            <person name="Wortman J.R."/>
            <person name="Gilsenan J.M."/>
            <person name="Joardar V."/>
            <person name="Deegan J."/>
            <person name="Clutterbuck J."/>
            <person name="Andersen M.R."/>
            <person name="Archer D."/>
            <person name="Bencina M."/>
            <person name="Braus G."/>
            <person name="Coutinho P."/>
            <person name="von Dohren H."/>
            <person name="Doonan J."/>
            <person name="Driessen A.J."/>
            <person name="Durek P."/>
            <person name="Espeso E."/>
            <person name="Fekete E."/>
            <person name="Flipphi M."/>
            <person name="Estrada C.G."/>
            <person name="Geysens S."/>
            <person name="Goldman G."/>
            <person name="de Groot P.W."/>
            <person name="Hansen K."/>
            <person name="Harris S.D."/>
            <person name="Heinekamp T."/>
            <person name="Helmstaedt K."/>
            <person name="Henrissat B."/>
            <person name="Hofmann G."/>
            <person name="Homan T."/>
            <person name="Horio T."/>
            <person name="Horiuchi H."/>
            <person name="James S."/>
            <person name="Jones M."/>
            <person name="Karaffa L."/>
            <person name="Karanyi Z."/>
            <person name="Kato M."/>
            <person name="Keller N."/>
            <person name="Kelly D.E."/>
            <person name="Kiel J.A."/>
            <person name="Kim J.M."/>
            <person name="van der Klei I.J."/>
            <person name="Klis F.M."/>
            <person name="Kovalchuk A."/>
            <person name="Krasevec N."/>
            <person name="Kubicek C.P."/>
            <person name="Liu B."/>
            <person name="Maccabe A."/>
            <person name="Meyer V."/>
            <person name="Mirabito P."/>
            <person name="Miskei M."/>
            <person name="Mos M."/>
            <person name="Mullins J."/>
            <person name="Nelson D.R."/>
            <person name="Nielsen J."/>
            <person name="Oakley B.R."/>
            <person name="Osmani S.A."/>
            <person name="Pakula T."/>
            <person name="Paszewski A."/>
            <person name="Paulsen I."/>
            <person name="Pilsyk S."/>
            <person name="Pocsi I."/>
            <person name="Punt P.J."/>
            <person name="Ram A.F."/>
            <person name="Ren Q."/>
            <person name="Robellet X."/>
            <person name="Robson G."/>
            <person name="Seiboth B."/>
            <person name="van Solingen P."/>
            <person name="Specht T."/>
            <person name="Sun J."/>
            <person name="Taheri-Talesh N."/>
            <person name="Takeshita N."/>
            <person name="Ussery D."/>
            <person name="vanKuyk P.A."/>
            <person name="Visser H."/>
            <person name="van de Vondervoort P.J."/>
            <person name="de Vries R.P."/>
            <person name="Walton J."/>
            <person name="Xiang X."/>
            <person name="Xiong Y."/>
            <person name="Zeng A.P."/>
            <person name="Brandt B.W."/>
            <person name="Cornell M.J."/>
            <person name="van den Hondel C.A."/>
            <person name="Visser J."/>
            <person name="Oliver S.G."/>
            <person name="Turner G."/>
        </authorList>
    </citation>
    <scope>GENOME REANNOTATION</scope>
    <source>
        <strain>FGSC A4 / ATCC 38163 / CBS 112.46 / NRRL 194 / M139</strain>
    </source>
</reference>